<reference key="1">
    <citation type="journal article" date="2005" name="DNA Res.">
        <title>Complete genome sequence of the facultative anaerobic magnetotactic bacterium Magnetospirillum sp. strain AMB-1.</title>
        <authorList>
            <person name="Matsunaga T."/>
            <person name="Okamura Y."/>
            <person name="Fukuda Y."/>
            <person name="Wahyudi A.T."/>
            <person name="Murase Y."/>
            <person name="Takeyama H."/>
        </authorList>
    </citation>
    <scope>NUCLEOTIDE SEQUENCE [LARGE SCALE GENOMIC DNA]</scope>
    <source>
        <strain>ATCC 700264 / AMB-1</strain>
    </source>
</reference>
<reference key="2">
    <citation type="journal article" date="2016" name="J. Biol. Chem.">
        <title>Magnetite biomineralization in Magnetospirillum magneticum is regulated by a switch-like behavior in the HtrA protease MamE.</title>
        <authorList>
            <person name="Hershey D.M."/>
            <person name="Browne P.J."/>
            <person name="Iavarone A.T."/>
            <person name="Teyra J."/>
            <person name="Lee E.H."/>
            <person name="Sidhu S.S."/>
            <person name="Komeili A."/>
        </authorList>
    </citation>
    <scope>PROTEIN SEQUENCE OF 273-286</scope>
    <scope>SUBCELLULAR LOCATION</scope>
    <scope>PROTEOLYTIC CLEAVAGE</scope>
    <scope>PROBABLE TOPOLOGY</scope>
    <source>
        <strain>ATCC 700264 / AMB-1</strain>
    </source>
</reference>
<reference key="3">
    <citation type="journal article" date="2010" name="Proc. Natl. Acad. Sci. U.S.A.">
        <title>Comprehensive genetic dissection of the magnetosome gene island reveals the step-wise assembly of a prokaryotic organelle.</title>
        <authorList>
            <person name="Murat D."/>
            <person name="Quinlan A."/>
            <person name="Vali H."/>
            <person name="Komeili A."/>
        </authorList>
    </citation>
    <scope>FUNCTION</scope>
    <scope>PROBABLE OPERON</scope>
    <scope>DISRUPTION PHENOTYPE</scope>
    <source>
        <strain>ATCC 700264 / AMB-1</strain>
    </source>
</reference>
<reference key="4">
    <citation type="journal article" date="2011" name="Mol. Microbiol.">
        <title>The HtrA/DegP family protease MamE is a bifunctional protein with roles in magnetosome protein localization and magnetite biomineralization.</title>
        <authorList>
            <person name="Quinlan A."/>
            <person name="Murat D."/>
            <person name="Vali H."/>
            <person name="Komeili A."/>
        </authorList>
    </citation>
    <scope>POSSIBLE FUNCTION AS A PROTEASE</scope>
    <scope>MUTAGENESIS OF HIS-116; ASP-149 AND THR-225</scope>
    <source>
        <strain>ATCC 700264 / AMB-1</strain>
    </source>
</reference>
<reference key="5">
    <citation type="journal article" date="2012" name="Mol. Microbiol.">
        <title>The magnetosome membrane protein, MmsF, is a major regulator of magnetite biomineralization in Magnetospirillum magneticum AMB-1.</title>
        <authorList>
            <person name="Murat D."/>
            <person name="Falahati V."/>
            <person name="Bertinetti L."/>
            <person name="Csencsits R."/>
            <person name="Koernig A."/>
            <person name="Downing K."/>
            <person name="Faivre D."/>
            <person name="Komeili A."/>
        </authorList>
    </citation>
    <scope>MINIMAL MAGNETOSOME ISLAND</scope>
    <source>
        <strain>ATCC 700264 / AMB-1</strain>
    </source>
</reference>
<reference evidence="12 13" key="6">
    <citation type="journal article" date="2016" name="PLoS Biol.">
        <title>MamO is a repurposed serine protease that promotes magnetite biomineralization through direct transition metal binding in magnetotactic bacteria.</title>
        <authorList>
            <person name="Hershey D.M."/>
            <person name="Ren X."/>
            <person name="Melnyk R.A."/>
            <person name="Browne P.J."/>
            <person name="Ozyamak E."/>
            <person name="Jones S.R."/>
            <person name="Chang M.C."/>
            <person name="Hurley J.H."/>
            <person name="Komeili A."/>
        </authorList>
    </citation>
    <scope>X-RAY CRYSTALLOGRAPHY (2.30 ANGSTROMS) OF 78-268</scope>
    <scope>FUNCTION</scope>
    <scope>COFACTOR</scope>
    <scope>DOMAIN</scope>
    <scope>PROTEOLYTIC CLEAVAGE</scope>
    <scope>DISRUPTION PHENOTYPE</scope>
    <scope>PUTATIVE TOPOLOGY</scope>
    <scope>MUTAGENESIS OF HIS-116; HIS-148; ASP-149; THR-225 AND HIS-263</scope>
    <source>
        <strain>ATCC 700264 / AMB-1</strain>
    </source>
</reference>
<gene>
    <name type="primary">mamO</name>
    <name type="ordered locus">amb0969</name>
</gene>
<keyword id="KW-0002">3D-structure</keyword>
<keyword id="KW-0091">Biomineralization</keyword>
<keyword id="KW-0903">Direct protein sequencing</keyword>
<keyword id="KW-1281">Magnetosome</keyword>
<keyword id="KW-0472">Membrane</keyword>
<keyword id="KW-0479">Metal-binding</keyword>
<keyword id="KW-0812">Transmembrane</keyword>
<keyword id="KW-1133">Transmembrane helix</keyword>
<feature type="chain" id="PRO_0000447781" description="Probable membrane transporter protein MamO">
    <location>
        <begin position="1"/>
        <end position="637"/>
    </location>
</feature>
<feature type="topological domain" description="Cytoplasmic" evidence="7">
    <location>
        <begin position="1"/>
        <end position="24"/>
    </location>
</feature>
<feature type="transmembrane region" description="Helical" evidence="1">
    <location>
        <begin position="25"/>
        <end position="45"/>
    </location>
</feature>
<feature type="topological domain" description="Lumenal" evidence="10 11">
    <location>
        <begin position="46"/>
        <end position="352"/>
    </location>
</feature>
<feature type="transmembrane region" description="Helical" evidence="1">
    <location>
        <begin position="353"/>
        <end position="373"/>
    </location>
</feature>
<feature type="topological domain" description="Cytoplasmic" evidence="7">
    <location>
        <begin position="374"/>
        <end position="378"/>
    </location>
</feature>
<feature type="transmembrane region" description="Helical" evidence="1">
    <location>
        <begin position="379"/>
        <end position="399"/>
    </location>
</feature>
<feature type="topological domain" description="Lumenal" evidence="7">
    <location>
        <begin position="400"/>
        <end position="416"/>
    </location>
</feature>
<feature type="transmembrane region" description="Helical" evidence="1">
    <location>
        <begin position="417"/>
        <end position="437"/>
    </location>
</feature>
<feature type="topological domain" description="Cytoplasmic" evidence="7">
    <location>
        <position position="438"/>
    </location>
</feature>
<feature type="transmembrane region" description="Helical" evidence="1">
    <location>
        <begin position="439"/>
        <end position="459"/>
    </location>
</feature>
<feature type="topological domain" description="Lumenal" evidence="7">
    <location>
        <begin position="460"/>
        <end position="517"/>
    </location>
</feature>
<feature type="transmembrane region" description="Helical" evidence="1">
    <location>
        <begin position="518"/>
        <end position="538"/>
    </location>
</feature>
<feature type="topological domain" description="Cytoplasmic" evidence="7">
    <location>
        <begin position="539"/>
        <end position="554"/>
    </location>
</feature>
<feature type="transmembrane region" description="Helical" evidence="1">
    <location>
        <begin position="555"/>
        <end position="575"/>
    </location>
</feature>
<feature type="topological domain" description="Lumenal" evidence="7">
    <location>
        <begin position="576"/>
        <end position="586"/>
    </location>
</feature>
<feature type="transmembrane region" description="Helical" evidence="1">
    <location>
        <begin position="587"/>
        <end position="607"/>
    </location>
</feature>
<feature type="topological domain" description="Cytoplasmic" evidence="7">
    <location>
        <begin position="608"/>
        <end position="616"/>
    </location>
</feature>
<feature type="transmembrane region" description="Helical" evidence="1">
    <location>
        <begin position="617"/>
        <end position="637"/>
    </location>
</feature>
<feature type="region of interest" description="Protease-like" evidence="5">
    <location>
        <begin position="78"/>
        <end position="268"/>
    </location>
</feature>
<feature type="region of interest" description="TSUP-like" evidence="10">
    <location>
        <begin position="370"/>
        <end position="637"/>
    </location>
</feature>
<feature type="binding site" evidence="10">
    <location>
        <position position="148"/>
    </location>
    <ligand>
        <name>a divalent metal cation</name>
        <dbReference type="ChEBI" id="CHEBI:60240"/>
    </ligand>
</feature>
<feature type="binding site" evidence="10">
    <location>
        <position position="263"/>
    </location>
    <ligand>
        <name>a divalent metal cation</name>
        <dbReference type="ChEBI" id="CHEBI:60240"/>
    </ligand>
</feature>
<feature type="mutagenesis site" description="Nearly complete loss of magnetic response when amb1002 to amb1007 are also deleted, makes small magnetite crystals at 30 degrees Celsius. At room temperature has less effect. Complete loss of magnetic response; when associated with A-149 and A-225." evidence="3 5">
    <original>H</original>
    <variation>A</variation>
    <location>
        <position position="116"/>
    </location>
</feature>
<feature type="mutagenesis site" description="Loss of magnetic response, no crystal formation when amb1002 to amb1007 are also deleted. Slightly improved Ni(2+) binding; when associated with A-263." evidence="5">
    <original>H</original>
    <variation>A</variation>
    <location>
        <position position="148"/>
    </location>
</feature>
<feature type="mutagenesis site" description="Nearly complete loss of magnetic response when amb1002 to amb1007 are also deleted, makes small magnetite crystals at 30 degrees Celsius. At room temperature almost no effect. Complete loss of magnetic response when amb1002 to amb1007 are also deleted; when associated with A-116 and A-225." evidence="3 5">
    <original>D</original>
    <variation>A</variation>
    <location>
        <position position="149"/>
    </location>
</feature>
<feature type="mutagenesis site" description="Wild-type magnetic response when amb1002 to amb1007 are also deleted, makes normal magnetite crystals at 30 degrees Celsius and room temperature. Complete loss of magnetic response; when associated with A-116 and A-149." evidence="3 5">
    <original>T</original>
    <variation>A</variation>
    <location>
        <position position="225"/>
    </location>
</feature>
<feature type="mutagenesis site" description="Loss of magnetic response, no crystal formation when amb1002 to amb1007 are also deleted. Slightly improved Ni(2+) binding; when associated with A-148." evidence="5">
    <original>H</original>
    <variation>A</variation>
    <location>
        <position position="263"/>
    </location>
</feature>
<accession>Q2W8Q2</accession>
<name>MAMO_PARM1</name>
<protein>
    <recommendedName>
        <fullName evidence="7">Probable membrane transporter protein MamO</fullName>
    </recommendedName>
</protein>
<dbReference type="EMBL" id="AP007255">
    <property type="protein sequence ID" value="BAE49773.1"/>
    <property type="molecule type" value="Genomic_DNA"/>
</dbReference>
<dbReference type="RefSeq" id="WP_011383400.1">
    <property type="nucleotide sequence ID" value="NC_007626.1"/>
</dbReference>
<dbReference type="PDB" id="5HM9">
    <property type="method" value="X-ray"/>
    <property type="resolution" value="2.60 A"/>
    <property type="chains" value="A=78-266"/>
</dbReference>
<dbReference type="PDB" id="5HMA">
    <property type="method" value="X-ray"/>
    <property type="resolution" value="2.30 A"/>
    <property type="chains" value="A=78-268"/>
</dbReference>
<dbReference type="PDBsum" id="5HM9"/>
<dbReference type="PDBsum" id="5HMA"/>
<dbReference type="SMR" id="Q2W8Q2"/>
<dbReference type="STRING" id="342108.amb0969"/>
<dbReference type="KEGG" id="mag:amb0969"/>
<dbReference type="HOGENOM" id="CLU_409275_0_0_5"/>
<dbReference type="OrthoDB" id="7315792at2"/>
<dbReference type="EvolutionaryTrace" id="Q2W8Q2"/>
<dbReference type="Proteomes" id="UP000007058">
    <property type="component" value="Chromosome"/>
</dbReference>
<dbReference type="GO" id="GO:0110146">
    <property type="term" value="C:magnetosome membrane"/>
    <property type="evidence" value="ECO:0000314"/>
    <property type="project" value="UniProtKB"/>
</dbReference>
<dbReference type="GO" id="GO:0046872">
    <property type="term" value="F:metal ion binding"/>
    <property type="evidence" value="ECO:0007669"/>
    <property type="project" value="UniProtKB-KW"/>
</dbReference>
<dbReference type="GO" id="GO:0004252">
    <property type="term" value="F:serine-type endopeptidase activity"/>
    <property type="evidence" value="ECO:0007669"/>
    <property type="project" value="InterPro"/>
</dbReference>
<dbReference type="GO" id="GO:0006508">
    <property type="term" value="P:proteolysis"/>
    <property type="evidence" value="ECO:0007669"/>
    <property type="project" value="InterPro"/>
</dbReference>
<dbReference type="Gene3D" id="2.40.10.10">
    <property type="entry name" value="Trypsin-like serine proteases"/>
    <property type="match status" value="2"/>
</dbReference>
<dbReference type="InterPro" id="IPR009003">
    <property type="entry name" value="Peptidase_S1_PA"/>
</dbReference>
<dbReference type="InterPro" id="IPR043504">
    <property type="entry name" value="Peptidase_S1_PA_chymotrypsin"/>
</dbReference>
<dbReference type="InterPro" id="IPR001940">
    <property type="entry name" value="Peptidase_S1C"/>
</dbReference>
<dbReference type="InterPro" id="IPR002781">
    <property type="entry name" value="TM_pro_TauE-like"/>
</dbReference>
<dbReference type="InterPro" id="IPR051598">
    <property type="entry name" value="TSUP/Inactive_protease-like"/>
</dbReference>
<dbReference type="NCBIfam" id="NF040961">
    <property type="entry name" value="MamO"/>
    <property type="match status" value="1"/>
</dbReference>
<dbReference type="PANTHER" id="PTHR43701">
    <property type="entry name" value="MEMBRANE TRANSPORTER PROTEIN MJ0441-RELATED"/>
    <property type="match status" value="1"/>
</dbReference>
<dbReference type="PANTHER" id="PTHR43701:SF2">
    <property type="entry name" value="MEMBRANE TRANSPORTER PROTEIN YJNA-RELATED"/>
    <property type="match status" value="1"/>
</dbReference>
<dbReference type="Pfam" id="PF01925">
    <property type="entry name" value="TauE"/>
    <property type="match status" value="1"/>
</dbReference>
<dbReference type="Pfam" id="PF13365">
    <property type="entry name" value="Trypsin_2"/>
    <property type="match status" value="1"/>
</dbReference>
<dbReference type="PRINTS" id="PR00834">
    <property type="entry name" value="PROTEASES2C"/>
</dbReference>
<dbReference type="SUPFAM" id="SSF50494">
    <property type="entry name" value="Trypsin-like serine proteases"/>
    <property type="match status" value="1"/>
</dbReference>
<organism>
    <name type="scientific">Paramagnetospirillum magneticum (strain ATCC 700264 / AMB-1)</name>
    <name type="common">Magnetospirillum magneticum</name>
    <dbReference type="NCBI Taxonomy" id="342108"/>
    <lineage>
        <taxon>Bacteria</taxon>
        <taxon>Pseudomonadati</taxon>
        <taxon>Pseudomonadota</taxon>
        <taxon>Alphaproteobacteria</taxon>
        <taxon>Rhodospirillales</taxon>
        <taxon>Magnetospirillaceae</taxon>
        <taxon>Paramagnetospirillum</taxon>
    </lineage>
</organism>
<sequence length="637" mass="66343">MIEVGETMGELPTNKIVFCERSWKTPVSILAFLIFVTFAWGIYLLDHYDEDDNFHGADDLSVGQFLVRNIAMPHVQRLYHTVPPAVVGVGGGGVNAGPVASGAIVGTNGYVITTLHSVSKLPEISVQVATTGGIRRFPAQVVKTIPGHDLALLKMQTTEKFLHFRMADVQTVVPGQQVFAFGRNMAGAPLVRQGLVQSADAPLAVGATQITHLLRSDAVYSWEQTGGPLVNAQGDLVGINIAATGPTGKVEGFTVPAQVIVSHLQDVVRFKKGSATAPGQPQTQTVAAGSTNWWSKARAVVGGPTAIPGMGMNVVQGNVVKGNVAPSIPSGMPFIDTDHVGGAKIGGYSVADIVGLVMLALAAGVTGGMMTMGGGVLQVAGMMVFFGYGMYLIRPVVFLTNVVVYGAASLRNDKAQLVQWDKVKPLIPWGIAGVILGYFIGNAIGDSVVGILLGLFALIMAGKAVMEILQPNAGEETAESISATEAEDEMDELMALADGTSRPKASGLALPEGHARSAVLGLPMGLFSGILGISGGVIEVPLQRYVGRISLQNAIANSSVLVFWASVAGSVVAFLHGSSTGLIHWEAPVTLALVMIPGAYVGGIIGARLMRVLPVRVLKGVYAATMAAIALKMLTSV</sequence>
<comment type="function">
    <text evidence="5 8 9 10">Plays 2 roles; promotes magnetite nucleation/formation and activates the MamE protease (Probable). Despite its near conservation of a protease-like sequence, this is probably not a protease (Probable) (PubMed:26981620). Required in conjunction with MamP for proteolysis of at least MamE, itself and MamP (PubMed:26981620). May transport a solute that controls MamE's protease activity. May place individual iron atoms into the magnetite lattice (Probable).</text>
</comment>
<comment type="cofactor">
    <cofactor evidence="10">
        <name>a metal cation</name>
        <dbReference type="ChEBI" id="CHEBI:25213"/>
    </cofactor>
    <text evidence="5">Binds to transition metal ions via His-148 and His-263, but also binds metal via other residues.</text>
</comment>
<comment type="subcellular location">
    <subcellularLocation>
        <location evidence="6">Magnetosome membrane</location>
        <topology evidence="11">Multi-pass membrane protein</topology>
    </subcellularLocation>
</comment>
<comment type="induction">
    <text evidence="8">Part of the probable 18 gene mamAB operon.</text>
</comment>
<comment type="domain">
    <text evidence="10">The N-terminal region is an inactive protease, the C-terminal region may have transporter activity which could activate the MamE protease.</text>
</comment>
<comment type="PTM">
    <text evidence="5 6">Subject to proteolytic cleavage by MamE.</text>
</comment>
<comment type="disruption phenotype">
    <text evidence="2">Cells have no magnetic response but still make empty magnetosome membranes; magnetosome proteins MamA and MamE localize normally (PubMed:20212111). Deletion of genes mamH to mamV (amb0961 to amb0978) gives cells with no magnetosomes and no magnetic response (PubMed:20212111).</text>
</comment>
<comment type="miscellaneous">
    <text evidence="7">This bacteria makes up to 20 cubo-octahedral magnetosomes of about 45 nm in diameter which contain membrane-bound crystals of magnetite (Fe(3)O(4)).</text>
</comment>
<comment type="miscellaneous">
    <text evidence="9">There is a paralogous gene with partially overlapping function in the genome (amb1004, called limO, AC Q2W8L7). LimO does not encode the C-terminal TSUP domain and does not complement a mamO deletion.</text>
</comment>
<comment type="miscellaneous">
    <text evidence="4">Expression of just the minimal mamAB gene cluster (amb0961 to amb0978), including this gene, is sufficient to form a minimal magnetosome chain with small magnetite particles.</text>
</comment>
<comment type="similarity">
    <text evidence="7">In the N-terminal section; belongs to the peptidase S1C family.</text>
</comment>
<comment type="similarity">
    <text evidence="7">In the C-terminal section; belongs to the 4-toluene sulfonate uptake permease (TSUP) (TC 2.A.102) family.</text>
</comment>
<comment type="caution">
    <text evidence="5 9">Initally suggested to be a protease, mutation of the protease domain active site residues does not alter its in vivo function in magnetosome formation.</text>
</comment>
<proteinExistence type="evidence at protein level"/>
<evidence type="ECO:0000255" key="1"/>
<evidence type="ECO:0000269" key="2">
    <source>
    </source>
</evidence>
<evidence type="ECO:0000269" key="3">
    <source>
    </source>
</evidence>
<evidence type="ECO:0000269" key="4">
    <source>
    </source>
</evidence>
<evidence type="ECO:0000269" key="5">
    <source>
    </source>
</evidence>
<evidence type="ECO:0000269" key="6">
    <source>
    </source>
</evidence>
<evidence type="ECO:0000305" key="7"/>
<evidence type="ECO:0000305" key="8">
    <source>
    </source>
</evidence>
<evidence type="ECO:0000305" key="9">
    <source>
    </source>
</evidence>
<evidence type="ECO:0000305" key="10">
    <source>
    </source>
</evidence>
<evidence type="ECO:0000305" key="11">
    <source>
    </source>
</evidence>
<evidence type="ECO:0007744" key="12">
    <source>
        <dbReference type="PDB" id="5HM9"/>
    </source>
</evidence>
<evidence type="ECO:0007744" key="13">
    <source>
        <dbReference type="PDB" id="5HMA"/>
    </source>
</evidence>